<accession>Q8JN69</accession>
<sequence length="84" mass="9562">MARLRRAKRTSYRRRRRTTRTRTVVTRTARSTVRRRGGRIVYRTSKTTRVGTRRMRGGFLPLLAPILAAAIGSIPGIVIAAKQK</sequence>
<comment type="function">
    <text evidence="1">The role of the precursor might be to condense the viral prochromatin for encapsidation by virtue of the two basic domains.</text>
</comment>
<comment type="subcellular location">
    <subcellularLocation>
        <location evidence="4">Virion</location>
    </subcellularLocation>
</comment>
<comment type="similarity">
    <text evidence="4">Belongs to the adenoviridae pX family.</text>
</comment>
<protein>
    <recommendedName>
        <fullName>Late L2 mu core protein</fullName>
    </recommendedName>
    <alternativeName>
        <fullName>Protein X</fullName>
        <shortName>pX</shortName>
    </alternativeName>
    <alternativeName>
        <fullName>pMu</fullName>
    </alternativeName>
</protein>
<feature type="propeptide" id="PRO_0000425907" evidence="1">
    <location>
        <begin position="1"/>
        <end position="38"/>
    </location>
</feature>
<feature type="peptide" id="PRO_0000425908" description="Late L2 mu core protein">
    <location>
        <begin position="39"/>
        <end position="58"/>
    </location>
</feature>
<feature type="propeptide" id="PRO_0000425909" evidence="1">
    <location>
        <begin position="59"/>
        <end position="84"/>
    </location>
</feature>
<feature type="region of interest" description="Disordered" evidence="3">
    <location>
        <begin position="1"/>
        <end position="35"/>
    </location>
</feature>
<feature type="compositionally biased region" description="Basic residues" evidence="3">
    <location>
        <begin position="1"/>
        <end position="20"/>
    </location>
</feature>
<feature type="compositionally biased region" description="Low complexity" evidence="3">
    <location>
        <begin position="21"/>
        <end position="31"/>
    </location>
</feature>
<feature type="site" description="Cleavage; by adenovirus protease" evidence="2">
    <location>
        <begin position="38"/>
        <end position="39"/>
    </location>
</feature>
<feature type="site" description="Cleavage; by adenovirus protease" evidence="2">
    <location>
        <begin position="58"/>
        <end position="59"/>
    </location>
</feature>
<evidence type="ECO:0000250" key="1"/>
<evidence type="ECO:0000255" key="2"/>
<evidence type="ECO:0000256" key="3">
    <source>
        <dbReference type="SAM" id="MobiDB-lite"/>
    </source>
</evidence>
<evidence type="ECO:0000305" key="4"/>
<proteinExistence type="inferred from homology"/>
<keyword id="KW-0238">DNA-binding</keyword>
<keyword id="KW-0426">Late protein</keyword>
<keyword id="KW-1185">Reference proteome</keyword>
<keyword id="KW-0946">Virion</keyword>
<gene>
    <name type="primary">PX</name>
</gene>
<organism>
    <name type="scientific">Snake adenovirus serotype 1</name>
    <name type="common">SnAdV-1</name>
    <dbReference type="NCBI Taxonomy" id="189830"/>
    <lineage>
        <taxon>Viruses</taxon>
        <taxon>Varidnaviria</taxon>
        <taxon>Bamfordvirae</taxon>
        <taxon>Preplasmiviricota</taxon>
        <taxon>Tectiliviricetes</taxon>
        <taxon>Rowavirales</taxon>
        <taxon>Adenoviridae</taxon>
        <taxon>Atadenovirus</taxon>
        <taxon>Snake atadenovirus A</taxon>
    </lineage>
</organism>
<name>L2MU_ADES1</name>
<dbReference type="EMBL" id="DQ106414">
    <property type="protein sequence ID" value="AAL92450.1"/>
    <property type="molecule type" value="Genomic_DNA"/>
</dbReference>
<dbReference type="RefSeq" id="YP_001552253.1">
    <property type="nucleotide sequence ID" value="NC_009989.1"/>
</dbReference>
<dbReference type="KEGG" id="vg:10973884"/>
<dbReference type="Proteomes" id="UP000136605">
    <property type="component" value="Genome"/>
</dbReference>
<dbReference type="GO" id="GO:0019013">
    <property type="term" value="C:viral nucleocapsid"/>
    <property type="evidence" value="ECO:0007669"/>
    <property type="project" value="InterPro"/>
</dbReference>
<dbReference type="GO" id="GO:0003677">
    <property type="term" value="F:DNA binding"/>
    <property type="evidence" value="ECO:0007669"/>
    <property type="project" value="UniProtKB-KW"/>
</dbReference>
<dbReference type="InterPro" id="IPR008393">
    <property type="entry name" value="Adenovirus_late_L2_mu_core"/>
</dbReference>
<dbReference type="Pfam" id="PF05829">
    <property type="entry name" value="Adeno_PX"/>
    <property type="match status" value="1"/>
</dbReference>
<reference key="1">
    <citation type="journal article" date="2002" name="J. Gen. Virol.">
        <title>Genetic analysis of an adenovirus isolated from corn snake (Elaphe guttata) implies common origin with the members of the proposed new genus Atadenovirus.</title>
        <authorList>
            <person name="Farkas S.L."/>
            <person name="Benko M."/>
            <person name="Elo P.T."/>
            <person name="Ursu K."/>
            <person name="Dan A."/>
            <person name="Ahne W."/>
            <person name="Harrach B."/>
        </authorList>
    </citation>
    <scope>NUCLEOTIDE SEQUENCE [GENOMIC DNA]</scope>
</reference>
<organismHost>
    <name type="scientific">Pantherophis guttatus</name>
    <name type="common">Corn snake</name>
    <name type="synonym">Elaphe guttata</name>
    <dbReference type="NCBI Taxonomy" id="94885"/>
</organismHost>